<evidence type="ECO:0000255" key="1"/>
<evidence type="ECO:0000269" key="2">
    <source>
    </source>
</evidence>
<evidence type="ECO:0000305" key="3"/>
<feature type="chain" id="PRO_0000170767" description="Putative sulfoquinovose importer">
    <location>
        <begin position="1"/>
        <end position="467"/>
    </location>
</feature>
<feature type="transmembrane region" description="Helical" evidence="1">
    <location>
        <begin position="17"/>
        <end position="37"/>
    </location>
</feature>
<feature type="transmembrane region" description="Helical" evidence="1">
    <location>
        <begin position="54"/>
        <end position="74"/>
    </location>
</feature>
<feature type="transmembrane region" description="Helical" evidence="1">
    <location>
        <begin position="88"/>
        <end position="108"/>
    </location>
</feature>
<feature type="transmembrane region" description="Helical" evidence="1">
    <location>
        <begin position="121"/>
        <end position="141"/>
    </location>
</feature>
<feature type="transmembrane region" description="Helical" evidence="1">
    <location>
        <begin position="160"/>
        <end position="180"/>
    </location>
</feature>
<feature type="transmembrane region" description="Helical" evidence="1">
    <location>
        <begin position="185"/>
        <end position="205"/>
    </location>
</feature>
<feature type="transmembrane region" description="Helical" evidence="1">
    <location>
        <begin position="238"/>
        <end position="258"/>
    </location>
</feature>
<feature type="transmembrane region" description="Helical" evidence="1">
    <location>
        <begin position="275"/>
        <end position="295"/>
    </location>
</feature>
<feature type="transmembrane region" description="Helical" evidence="1">
    <location>
        <begin position="303"/>
        <end position="323"/>
    </location>
</feature>
<feature type="transmembrane region" description="Helical" evidence="1">
    <location>
        <begin position="325"/>
        <end position="345"/>
    </location>
</feature>
<feature type="transmembrane region" description="Helical" evidence="1">
    <location>
        <begin position="379"/>
        <end position="399"/>
    </location>
</feature>
<feature type="transmembrane region" description="Helical" evidence="1">
    <location>
        <begin position="414"/>
        <end position="434"/>
    </location>
</feature>
<keyword id="KW-0997">Cell inner membrane</keyword>
<keyword id="KW-1003">Cell membrane</keyword>
<keyword id="KW-0472">Membrane</keyword>
<keyword id="KW-1185">Reference proteome</keyword>
<keyword id="KW-0769">Symport</keyword>
<keyword id="KW-0812">Transmembrane</keyword>
<keyword id="KW-1133">Transmembrane helix</keyword>
<keyword id="KW-0813">Transport</keyword>
<organism>
    <name type="scientific">Escherichia coli (strain K12)</name>
    <dbReference type="NCBI Taxonomy" id="83333"/>
    <lineage>
        <taxon>Bacteria</taxon>
        <taxon>Pseudomonadati</taxon>
        <taxon>Pseudomonadota</taxon>
        <taxon>Gammaproteobacteria</taxon>
        <taxon>Enterobacterales</taxon>
        <taxon>Enterobacteriaceae</taxon>
        <taxon>Escherichia</taxon>
    </lineage>
</organism>
<reference key="1">
    <citation type="journal article" date="1993" name="Nucleic Acids Res.">
        <title>Analysis of the Escherichia coli genome. III. DNA sequence of the region from 87.2 to 89.2 minutes.</title>
        <authorList>
            <person name="Plunkett G. III"/>
            <person name="Burland V."/>
            <person name="Daniels D.L."/>
            <person name="Blattner F.R."/>
        </authorList>
    </citation>
    <scope>NUCLEOTIDE SEQUENCE [LARGE SCALE GENOMIC DNA]</scope>
    <source>
        <strain>K12 / MG1655 / ATCC 47076</strain>
    </source>
</reference>
<reference key="2">
    <citation type="journal article" date="1997" name="Science">
        <title>The complete genome sequence of Escherichia coli K-12.</title>
        <authorList>
            <person name="Blattner F.R."/>
            <person name="Plunkett G. III"/>
            <person name="Bloch C.A."/>
            <person name="Perna N.T."/>
            <person name="Burland V."/>
            <person name="Riley M."/>
            <person name="Collado-Vides J."/>
            <person name="Glasner J.D."/>
            <person name="Rode C.K."/>
            <person name="Mayhew G.F."/>
            <person name="Gregor J."/>
            <person name="Davis N.W."/>
            <person name="Kirkpatrick H.A."/>
            <person name="Goeden M.A."/>
            <person name="Rose D.J."/>
            <person name="Mau B."/>
            <person name="Shao Y."/>
        </authorList>
    </citation>
    <scope>NUCLEOTIDE SEQUENCE [LARGE SCALE GENOMIC DNA]</scope>
    <scope>SEQUENCE REVISION</scope>
    <source>
        <strain>K12 / MG1655 / ATCC 47076</strain>
    </source>
</reference>
<reference key="3">
    <citation type="journal article" date="2006" name="Nucleic Acids Res.">
        <title>Escherichia coli K-12: a cooperatively developed annotation snapshot -- 2005.</title>
        <authorList>
            <person name="Riley M."/>
            <person name="Abe T."/>
            <person name="Arnaud M.B."/>
            <person name="Berlyn M.K.B."/>
            <person name="Blattner F.R."/>
            <person name="Chaudhuri R.R."/>
            <person name="Glasner J.D."/>
            <person name="Horiuchi T."/>
            <person name="Keseler I.M."/>
            <person name="Kosuge T."/>
            <person name="Mori H."/>
            <person name="Perna N.T."/>
            <person name="Plunkett G. III"/>
            <person name="Rudd K.E."/>
            <person name="Serres M.H."/>
            <person name="Thomas G.H."/>
            <person name="Thomson N.R."/>
            <person name="Wishart D."/>
            <person name="Wanner B.L."/>
        </authorList>
    </citation>
    <scope>SEQUENCE REVISION</scope>
</reference>
<reference key="4">
    <citation type="journal article" date="2006" name="Mol. Syst. Biol.">
        <title>Highly accurate genome sequences of Escherichia coli K-12 strains MG1655 and W3110.</title>
        <authorList>
            <person name="Hayashi K."/>
            <person name="Morooka N."/>
            <person name="Yamamoto Y."/>
            <person name="Fujita K."/>
            <person name="Isono K."/>
            <person name="Choi S."/>
            <person name="Ohtsubo E."/>
            <person name="Baba T."/>
            <person name="Wanner B.L."/>
            <person name="Mori H."/>
            <person name="Horiuchi T."/>
        </authorList>
    </citation>
    <scope>NUCLEOTIDE SEQUENCE [LARGE SCALE GENOMIC DNA]</scope>
    <source>
        <strain>K12 / W3110 / ATCC 27325 / DSM 5911</strain>
    </source>
</reference>
<reference key="5">
    <citation type="journal article" date="2014" name="Nature">
        <title>Sulphoglycolysis in Escherichia coli K-12 closes a gap in the biogeochemical sulphur cycle.</title>
        <authorList>
            <person name="Denger K."/>
            <person name="Weiss M."/>
            <person name="Felux A.K."/>
            <person name="Schneider A."/>
            <person name="Mayer C."/>
            <person name="Spiteller D."/>
            <person name="Huhn T."/>
            <person name="Cook A.M."/>
            <person name="Schleheck D."/>
        </authorList>
    </citation>
    <scope>FUNCTION</scope>
    <scope>DISRUPTION PHENOTYPE</scope>
    <source>
        <strain>K12</strain>
    </source>
</reference>
<accession>P32136</accession>
<accession>P76774</accession>
<accession>Q2M8H3</accession>
<accession>Q6BEY1</accession>
<name>YIHO_ECOLI</name>
<protein>
    <recommendedName>
        <fullName>Putative sulfoquinovose importer</fullName>
    </recommendedName>
</protein>
<comment type="function">
    <text evidence="2">Could be involved in sulfoquinovose import.</text>
</comment>
<comment type="subcellular location">
    <subcellularLocation>
        <location evidence="3">Cell inner membrane</location>
        <topology evidence="3">Multi-pass membrane protein</topology>
    </subcellularLocation>
</comment>
<comment type="disruption phenotype">
    <text evidence="2">Mutant fails to grow on sulfoquinovose as a sole carbon source.</text>
</comment>
<comment type="similarity">
    <text evidence="3">Belongs to the sodium:galactoside symporter (TC 2.A.2) family.</text>
</comment>
<comment type="sequence caution" evidence="3">
    <conflict type="frameshift">
        <sequence resource="EMBL-CDS" id="AAB03009"/>
    </conflict>
</comment>
<proteinExistence type="inferred from homology"/>
<sequence>MSDHNPLTLKLNLREKIAYGMGDVGSNLMLCIGTLYLLKFYTDELGMPAYYGGIIFLVAKFFTAFTDMLTGFLLDSRKNIGPKGKFRPFILYAAVPAALIATLQFIATTFCLPVKTTIATALFMMFGLSYSLMNCSYGAMIPAITKNPNERAQLAAYRQGGATIGLLICTVAFIPLQSLFSDSTVGYACAALMFSIGGFIFMMLCYRGVKEHYVDTTPTGHKASILKSFCAIFRNPPLLVLCIANLCTLAAFNIKLAIQVYYTQYVLNDINLLSWMGFFSMGCILIGVLLVPLTVKCFGKKQVYLAGMVLWAVGDILNYFWGSNSFTFVMFSCVAFFGTAFVNSLNWALVPDTVDYGEWKTGIRAEGSVYTGYTFFRKISAALAGFLPGIMLTQIGYVPNIAQSDATLQGLRQLIFIWPCALAIIAALTMGFFYTLNEKRFALIIEEINQRKNKEMATEEKTASVTL</sequence>
<dbReference type="EMBL" id="L19201">
    <property type="protein sequence ID" value="AAB03009.1"/>
    <property type="status" value="ALT_FRAME"/>
    <property type="molecule type" value="Genomic_DNA"/>
</dbReference>
<dbReference type="EMBL" id="U00096">
    <property type="protein sequence ID" value="AAT48233.1"/>
    <property type="molecule type" value="Genomic_DNA"/>
</dbReference>
<dbReference type="EMBL" id="AP009048">
    <property type="protein sequence ID" value="BAE77433.1"/>
    <property type="molecule type" value="Genomic_DNA"/>
</dbReference>
<dbReference type="RefSeq" id="WP_001295267.1">
    <property type="nucleotide sequence ID" value="NZ_SSZK01000026.1"/>
</dbReference>
<dbReference type="RefSeq" id="YP_026275.1">
    <property type="nucleotide sequence ID" value="NC_000913.3"/>
</dbReference>
<dbReference type="SMR" id="P32136"/>
<dbReference type="BioGRID" id="4262636">
    <property type="interactions" value="11"/>
</dbReference>
<dbReference type="FunCoup" id="P32136">
    <property type="interactions" value="254"/>
</dbReference>
<dbReference type="STRING" id="511145.b3876"/>
<dbReference type="TCDB" id="2.A.2.3.15">
    <property type="family name" value="the glycoside-pentoside-hexuronide (gph):cation symporter family"/>
</dbReference>
<dbReference type="PaxDb" id="511145-b3876"/>
<dbReference type="EnsemblBacteria" id="AAT48233">
    <property type="protein sequence ID" value="AAT48233"/>
    <property type="gene ID" value="b3876"/>
</dbReference>
<dbReference type="GeneID" id="948377"/>
<dbReference type="KEGG" id="ecj:JW5852"/>
<dbReference type="KEGG" id="eco:b3876"/>
<dbReference type="KEGG" id="ecoc:C3026_20955"/>
<dbReference type="PATRIC" id="fig|1411691.4.peg.2835"/>
<dbReference type="EchoBASE" id="EB1787"/>
<dbReference type="eggNOG" id="COG2211">
    <property type="taxonomic scope" value="Bacteria"/>
</dbReference>
<dbReference type="HOGENOM" id="CLU_027408_0_1_6"/>
<dbReference type="InParanoid" id="P32136"/>
<dbReference type="OMA" id="MAFFGTA"/>
<dbReference type="OrthoDB" id="181905at2"/>
<dbReference type="PhylomeDB" id="P32136"/>
<dbReference type="BioCyc" id="EcoCyc:YIHO-MONOMER"/>
<dbReference type="BioCyc" id="MetaCyc:YIHO-MONOMER"/>
<dbReference type="PRO" id="PR:P32136"/>
<dbReference type="Proteomes" id="UP000000625">
    <property type="component" value="Chromosome"/>
</dbReference>
<dbReference type="GO" id="GO:0005886">
    <property type="term" value="C:plasma membrane"/>
    <property type="evidence" value="ECO:0000314"/>
    <property type="project" value="EcoCyc"/>
</dbReference>
<dbReference type="GO" id="GO:1901682">
    <property type="term" value="F:sulfur compound transmembrane transporter activity"/>
    <property type="evidence" value="ECO:0000315"/>
    <property type="project" value="EcoCyc"/>
</dbReference>
<dbReference type="GO" id="GO:0015293">
    <property type="term" value="F:symporter activity"/>
    <property type="evidence" value="ECO:0007669"/>
    <property type="project" value="UniProtKB-KW"/>
</dbReference>
<dbReference type="GO" id="GO:0008643">
    <property type="term" value="P:carbohydrate transport"/>
    <property type="evidence" value="ECO:0007669"/>
    <property type="project" value="InterPro"/>
</dbReference>
<dbReference type="GO" id="GO:0006814">
    <property type="term" value="P:sodium ion transport"/>
    <property type="evidence" value="ECO:0007669"/>
    <property type="project" value="InterPro"/>
</dbReference>
<dbReference type="GO" id="GO:0072348">
    <property type="term" value="P:sulfur compound transport"/>
    <property type="evidence" value="ECO:0000315"/>
    <property type="project" value="EcoCyc"/>
</dbReference>
<dbReference type="GO" id="GO:0055085">
    <property type="term" value="P:transmembrane transport"/>
    <property type="evidence" value="ECO:0000318"/>
    <property type="project" value="GO_Central"/>
</dbReference>
<dbReference type="CDD" id="cd17332">
    <property type="entry name" value="MFS_MelB_like"/>
    <property type="match status" value="1"/>
</dbReference>
<dbReference type="FunFam" id="1.20.1250.20:FF:000063">
    <property type="entry name" value="MFS transporter"/>
    <property type="match status" value="1"/>
</dbReference>
<dbReference type="Gene3D" id="1.20.1250.20">
    <property type="entry name" value="MFS general substrate transporter like domains"/>
    <property type="match status" value="1"/>
</dbReference>
<dbReference type="InterPro" id="IPR039672">
    <property type="entry name" value="MFS_2"/>
</dbReference>
<dbReference type="InterPro" id="IPR036259">
    <property type="entry name" value="MFS_trans_sf"/>
</dbReference>
<dbReference type="InterPro" id="IPR001927">
    <property type="entry name" value="Na/Gal_symport"/>
</dbReference>
<dbReference type="InterPro" id="IPR018043">
    <property type="entry name" value="Na/Gal_symport_CS"/>
</dbReference>
<dbReference type="NCBIfam" id="TIGR00792">
    <property type="entry name" value="gph"/>
    <property type="match status" value="1"/>
</dbReference>
<dbReference type="PANTHER" id="PTHR11328">
    <property type="entry name" value="MAJOR FACILITATOR SUPERFAMILY DOMAIN-CONTAINING PROTEIN"/>
    <property type="match status" value="1"/>
</dbReference>
<dbReference type="PANTHER" id="PTHR11328:SF43">
    <property type="entry name" value="SULFOQUINOVOSE IMPORTER-RELATED"/>
    <property type="match status" value="1"/>
</dbReference>
<dbReference type="Pfam" id="PF13347">
    <property type="entry name" value="MFS_2"/>
    <property type="match status" value="1"/>
</dbReference>
<dbReference type="SUPFAM" id="SSF103473">
    <property type="entry name" value="MFS general substrate transporter"/>
    <property type="match status" value="1"/>
</dbReference>
<dbReference type="PROSITE" id="PS00872">
    <property type="entry name" value="NA_GALACTOSIDE_SYMP"/>
    <property type="match status" value="1"/>
</dbReference>
<gene>
    <name type="primary">yihO</name>
    <name type="ordered locus">b3876</name>
    <name type="ordered locus">JW5852</name>
</gene>